<dbReference type="EMBL" id="EF103295">
    <property type="protein sequence ID" value="ABM47034.1"/>
    <property type="molecule type" value="Genomic_DNA"/>
</dbReference>
<dbReference type="SMR" id="A1YLR8"/>
<dbReference type="GO" id="GO:0005743">
    <property type="term" value="C:mitochondrial inner membrane"/>
    <property type="evidence" value="ECO:0007669"/>
    <property type="project" value="UniProtKB-SubCell"/>
</dbReference>
<dbReference type="GO" id="GO:0045275">
    <property type="term" value="C:respiratory chain complex III"/>
    <property type="evidence" value="ECO:0007669"/>
    <property type="project" value="InterPro"/>
</dbReference>
<dbReference type="GO" id="GO:0046872">
    <property type="term" value="F:metal ion binding"/>
    <property type="evidence" value="ECO:0007669"/>
    <property type="project" value="UniProtKB-KW"/>
</dbReference>
<dbReference type="GO" id="GO:0008121">
    <property type="term" value="F:ubiquinol-cytochrome-c reductase activity"/>
    <property type="evidence" value="ECO:0007669"/>
    <property type="project" value="InterPro"/>
</dbReference>
<dbReference type="GO" id="GO:0006122">
    <property type="term" value="P:mitochondrial electron transport, ubiquinol to cytochrome c"/>
    <property type="evidence" value="ECO:0007669"/>
    <property type="project" value="TreeGrafter"/>
</dbReference>
<dbReference type="CDD" id="cd00290">
    <property type="entry name" value="cytochrome_b_C"/>
    <property type="match status" value="1"/>
</dbReference>
<dbReference type="CDD" id="cd00284">
    <property type="entry name" value="Cytochrome_b_N"/>
    <property type="match status" value="1"/>
</dbReference>
<dbReference type="FunFam" id="1.20.810.10:FF:000002">
    <property type="entry name" value="Cytochrome b"/>
    <property type="match status" value="1"/>
</dbReference>
<dbReference type="Gene3D" id="1.20.810.10">
    <property type="entry name" value="Cytochrome Bc1 Complex, Chain C"/>
    <property type="match status" value="1"/>
</dbReference>
<dbReference type="InterPro" id="IPR005798">
    <property type="entry name" value="Cyt_b/b6_C"/>
</dbReference>
<dbReference type="InterPro" id="IPR036150">
    <property type="entry name" value="Cyt_b/b6_C_sf"/>
</dbReference>
<dbReference type="InterPro" id="IPR005797">
    <property type="entry name" value="Cyt_b/b6_N"/>
</dbReference>
<dbReference type="InterPro" id="IPR027387">
    <property type="entry name" value="Cytb/b6-like_sf"/>
</dbReference>
<dbReference type="InterPro" id="IPR030689">
    <property type="entry name" value="Cytochrome_b"/>
</dbReference>
<dbReference type="InterPro" id="IPR048260">
    <property type="entry name" value="Cytochrome_b_C_euk/bac"/>
</dbReference>
<dbReference type="InterPro" id="IPR048259">
    <property type="entry name" value="Cytochrome_b_N_euk/bac"/>
</dbReference>
<dbReference type="InterPro" id="IPR016174">
    <property type="entry name" value="Di-haem_cyt_TM"/>
</dbReference>
<dbReference type="PANTHER" id="PTHR19271">
    <property type="entry name" value="CYTOCHROME B"/>
    <property type="match status" value="1"/>
</dbReference>
<dbReference type="PANTHER" id="PTHR19271:SF16">
    <property type="entry name" value="CYTOCHROME B"/>
    <property type="match status" value="1"/>
</dbReference>
<dbReference type="Pfam" id="PF00032">
    <property type="entry name" value="Cytochrom_B_C"/>
    <property type="match status" value="1"/>
</dbReference>
<dbReference type="Pfam" id="PF00033">
    <property type="entry name" value="Cytochrome_B"/>
    <property type="match status" value="1"/>
</dbReference>
<dbReference type="PIRSF" id="PIRSF038885">
    <property type="entry name" value="COB"/>
    <property type="match status" value="1"/>
</dbReference>
<dbReference type="SUPFAM" id="SSF81648">
    <property type="entry name" value="a domain/subunit of cytochrome bc1 complex (Ubiquinol-cytochrome c reductase)"/>
    <property type="match status" value="1"/>
</dbReference>
<dbReference type="SUPFAM" id="SSF81342">
    <property type="entry name" value="Transmembrane di-heme cytochromes"/>
    <property type="match status" value="1"/>
</dbReference>
<dbReference type="PROSITE" id="PS51003">
    <property type="entry name" value="CYTB_CTER"/>
    <property type="match status" value="1"/>
</dbReference>
<dbReference type="PROSITE" id="PS51002">
    <property type="entry name" value="CYTB_NTER"/>
    <property type="match status" value="1"/>
</dbReference>
<evidence type="ECO:0000250" key="1"/>
<evidence type="ECO:0000250" key="2">
    <source>
        <dbReference type="UniProtKB" id="P00157"/>
    </source>
</evidence>
<evidence type="ECO:0000255" key="3">
    <source>
        <dbReference type="PROSITE-ProRule" id="PRU00967"/>
    </source>
</evidence>
<evidence type="ECO:0000255" key="4">
    <source>
        <dbReference type="PROSITE-ProRule" id="PRU00968"/>
    </source>
</evidence>
<keyword id="KW-0249">Electron transport</keyword>
<keyword id="KW-0349">Heme</keyword>
<keyword id="KW-0408">Iron</keyword>
<keyword id="KW-0472">Membrane</keyword>
<keyword id="KW-0479">Metal-binding</keyword>
<keyword id="KW-0496">Mitochondrion</keyword>
<keyword id="KW-0999">Mitochondrion inner membrane</keyword>
<keyword id="KW-0679">Respiratory chain</keyword>
<keyword id="KW-0812">Transmembrane</keyword>
<keyword id="KW-1133">Transmembrane helix</keyword>
<keyword id="KW-0813">Transport</keyword>
<keyword id="KW-0830">Ubiquinone</keyword>
<reference key="1">
    <citation type="journal article" date="2006" name="Primate Rep.">
        <title>Molecular phylogeny and taxonomic revision of the eastern woolly lemurs (Avahi laniger).</title>
        <authorList>
            <person name="Zaramody A."/>
            <person name="Fausser J.-L."/>
            <person name="Roos C."/>
            <person name="Zinner D."/>
            <person name="Andriaholinirina N."/>
            <person name="Rabarivola C."/>
            <person name="Norsica I."/>
            <person name="Tattersall I."/>
            <person name="Rumpler Y."/>
        </authorList>
    </citation>
    <scope>NUCLEOTIDE SEQUENCE [GENOMIC DNA]</scope>
</reference>
<comment type="function">
    <text evidence="2">Component of the ubiquinol-cytochrome c reductase complex (complex III or cytochrome b-c1 complex) that is part of the mitochondrial respiratory chain. The b-c1 complex mediates electron transfer from ubiquinol to cytochrome c. Contributes to the generation of a proton gradient across the mitochondrial membrane that is then used for ATP synthesis.</text>
</comment>
<comment type="cofactor">
    <cofactor evidence="2">
        <name>heme b</name>
        <dbReference type="ChEBI" id="CHEBI:60344"/>
    </cofactor>
    <text evidence="2">Binds 2 heme b groups non-covalently.</text>
</comment>
<comment type="subunit">
    <text evidence="2">The cytochrome bc1 complex contains 11 subunits: 3 respiratory subunits (MT-CYB, CYC1 and UQCRFS1), 2 core proteins (UQCRC1 and UQCRC2) and 6 low-molecular weight proteins (UQCRH/QCR6, UQCRB/QCR7, UQCRQ/QCR8, UQCR10/QCR9, UQCR11/QCR10 and a cleavage product of UQCRFS1). This cytochrome bc1 complex then forms a dimer.</text>
</comment>
<comment type="subcellular location">
    <subcellularLocation>
        <location evidence="2">Mitochondrion inner membrane</location>
        <topology evidence="2">Multi-pass membrane protein</topology>
    </subcellularLocation>
</comment>
<comment type="miscellaneous">
    <text evidence="1">Heme 1 (or BL or b562) is low-potential and absorbs at about 562 nm, and heme 2 (or BH or b566) is high-potential and absorbs at about 566 nm.</text>
</comment>
<comment type="similarity">
    <text evidence="3 4">Belongs to the cytochrome b family.</text>
</comment>
<comment type="caution">
    <text evidence="2">The full-length protein contains only eight transmembrane helices, not nine as predicted by bioinformatics tools.</text>
</comment>
<organism>
    <name type="scientific">Avahi cleesei</name>
    <name type="common">Cleese's woolly lemur</name>
    <name type="synonym">Bemaraha woolly lemur</name>
    <dbReference type="NCBI Taxonomy" id="402244"/>
    <lineage>
        <taxon>Eukaryota</taxon>
        <taxon>Metazoa</taxon>
        <taxon>Chordata</taxon>
        <taxon>Craniata</taxon>
        <taxon>Vertebrata</taxon>
        <taxon>Euteleostomi</taxon>
        <taxon>Mammalia</taxon>
        <taxon>Eutheria</taxon>
        <taxon>Euarchontoglires</taxon>
        <taxon>Primates</taxon>
        <taxon>Strepsirrhini</taxon>
        <taxon>Lemuriformes</taxon>
        <taxon>Indriidae</taxon>
        <taxon>Avahi</taxon>
    </lineage>
</organism>
<proteinExistence type="inferred from homology"/>
<gene>
    <name type="primary">MT-CYB</name>
    <name type="synonym">COB</name>
    <name type="synonym">CYTB</name>
    <name type="synonym">MTCYB</name>
</gene>
<accession>A1YLR8</accession>
<protein>
    <recommendedName>
        <fullName>Cytochrome b</fullName>
    </recommendedName>
    <alternativeName>
        <fullName>Complex III subunit 3</fullName>
    </alternativeName>
    <alternativeName>
        <fullName>Complex III subunit III</fullName>
    </alternativeName>
    <alternativeName>
        <fullName>Cytochrome b-c1 complex subunit 3</fullName>
    </alternativeName>
    <alternativeName>
        <fullName>Ubiquinol-cytochrome-c reductase complex cytochrome b subunit</fullName>
    </alternativeName>
</protein>
<sequence length="379" mass="42573">MTNIRKIHPLMKIMNNSFIDLPTPSNISSWWNFGSLLGACLALQIVTGLFLAMHYTADTMTAFSSVTHICRDVNYGWMIRYLHANGASMFFLCLFIHVGRGLYYGSFTLSETWNIGITLLLTVMATAFMGYVLPWGQMSFWGATVITNLLSAIPYIGPNLVEWIWGGFSVDKATLTRFFAFHFILPFIITALVMIHLLFLHETGSNNPLGISSNPDKIPFHPYYTTKDLLGAILLILPLMNLVLFFPDLLGDPDNYTPANPLNTPPHIKPEWYFLFAYAILRSIPNKLGGVLALISSILILAIIPLLQTAKQQSMMFRPLSQCLFWVLAADLCTLTWIGGQPVENPFISIGQTASILYFSLILIIMPTVSMIENKMLKW</sequence>
<feature type="chain" id="PRO_0000323388" description="Cytochrome b">
    <location>
        <begin position="1"/>
        <end position="379"/>
    </location>
</feature>
<feature type="transmembrane region" description="Helical" evidence="2">
    <location>
        <begin position="33"/>
        <end position="53"/>
    </location>
</feature>
<feature type="transmembrane region" description="Helical" evidence="2">
    <location>
        <begin position="77"/>
        <end position="98"/>
    </location>
</feature>
<feature type="transmembrane region" description="Helical" evidence="2">
    <location>
        <begin position="113"/>
        <end position="133"/>
    </location>
</feature>
<feature type="transmembrane region" description="Helical" evidence="2">
    <location>
        <begin position="178"/>
        <end position="198"/>
    </location>
</feature>
<feature type="transmembrane region" description="Helical" evidence="2">
    <location>
        <begin position="226"/>
        <end position="246"/>
    </location>
</feature>
<feature type="transmembrane region" description="Helical" evidence="2">
    <location>
        <begin position="288"/>
        <end position="308"/>
    </location>
</feature>
<feature type="transmembrane region" description="Helical" evidence="2">
    <location>
        <begin position="320"/>
        <end position="340"/>
    </location>
</feature>
<feature type="transmembrane region" description="Helical" evidence="2">
    <location>
        <begin position="347"/>
        <end position="367"/>
    </location>
</feature>
<feature type="binding site" description="axial binding residue" evidence="2">
    <location>
        <position position="83"/>
    </location>
    <ligand>
        <name>heme b</name>
        <dbReference type="ChEBI" id="CHEBI:60344"/>
        <label>b562</label>
    </ligand>
    <ligandPart>
        <name>Fe</name>
        <dbReference type="ChEBI" id="CHEBI:18248"/>
    </ligandPart>
</feature>
<feature type="binding site" description="axial binding residue" evidence="2">
    <location>
        <position position="97"/>
    </location>
    <ligand>
        <name>heme b</name>
        <dbReference type="ChEBI" id="CHEBI:60344"/>
        <label>b566</label>
    </ligand>
    <ligandPart>
        <name>Fe</name>
        <dbReference type="ChEBI" id="CHEBI:18248"/>
    </ligandPart>
</feature>
<feature type="binding site" description="axial binding residue" evidence="2">
    <location>
        <position position="182"/>
    </location>
    <ligand>
        <name>heme b</name>
        <dbReference type="ChEBI" id="CHEBI:60344"/>
        <label>b562</label>
    </ligand>
    <ligandPart>
        <name>Fe</name>
        <dbReference type="ChEBI" id="CHEBI:18248"/>
    </ligandPart>
</feature>
<feature type="binding site" description="axial binding residue" evidence="2">
    <location>
        <position position="196"/>
    </location>
    <ligand>
        <name>heme b</name>
        <dbReference type="ChEBI" id="CHEBI:60344"/>
        <label>b566</label>
    </ligand>
    <ligandPart>
        <name>Fe</name>
        <dbReference type="ChEBI" id="CHEBI:18248"/>
    </ligandPart>
</feature>
<feature type="binding site" evidence="2">
    <location>
        <position position="201"/>
    </location>
    <ligand>
        <name>a ubiquinone</name>
        <dbReference type="ChEBI" id="CHEBI:16389"/>
    </ligand>
</feature>
<geneLocation type="mitochondrion"/>
<name>CYB_AVACL</name>